<dbReference type="EC" id="2.4.1.21" evidence="1"/>
<dbReference type="EMBL" id="CP001144">
    <property type="protein sequence ID" value="ACH78021.1"/>
    <property type="molecule type" value="Genomic_DNA"/>
</dbReference>
<dbReference type="RefSeq" id="WP_001197669.1">
    <property type="nucleotide sequence ID" value="NC_011205.1"/>
</dbReference>
<dbReference type="SMR" id="B5FKF4"/>
<dbReference type="CAZy" id="GT5">
    <property type="family name" value="Glycosyltransferase Family 5"/>
</dbReference>
<dbReference type="KEGG" id="sed:SeD_A3905"/>
<dbReference type="HOGENOM" id="CLU_009583_18_4_6"/>
<dbReference type="UniPathway" id="UPA00164"/>
<dbReference type="Proteomes" id="UP000008322">
    <property type="component" value="Chromosome"/>
</dbReference>
<dbReference type="GO" id="GO:0005829">
    <property type="term" value="C:cytosol"/>
    <property type="evidence" value="ECO:0007669"/>
    <property type="project" value="TreeGrafter"/>
</dbReference>
<dbReference type="GO" id="GO:0009011">
    <property type="term" value="F:alpha-1,4-glucan glucosyltransferase (ADP-glucose donor) activity"/>
    <property type="evidence" value="ECO:0007669"/>
    <property type="project" value="UniProtKB-UniRule"/>
</dbReference>
<dbReference type="GO" id="GO:0004373">
    <property type="term" value="F:alpha-1,4-glucan glucosyltransferase (UDP-glucose donor) activity"/>
    <property type="evidence" value="ECO:0007669"/>
    <property type="project" value="InterPro"/>
</dbReference>
<dbReference type="GO" id="GO:0005978">
    <property type="term" value="P:glycogen biosynthetic process"/>
    <property type="evidence" value="ECO:0007669"/>
    <property type="project" value="UniProtKB-UniRule"/>
</dbReference>
<dbReference type="CDD" id="cd03791">
    <property type="entry name" value="GT5_Glycogen_synthase_DULL1-like"/>
    <property type="match status" value="1"/>
</dbReference>
<dbReference type="FunFam" id="3.40.50.2000:FF:000008">
    <property type="entry name" value="Glycogen synthase"/>
    <property type="match status" value="1"/>
</dbReference>
<dbReference type="FunFam" id="3.40.50.2000:FF:000011">
    <property type="entry name" value="Glycogen synthase"/>
    <property type="match status" value="1"/>
</dbReference>
<dbReference type="Gene3D" id="3.40.50.2000">
    <property type="entry name" value="Glycogen Phosphorylase B"/>
    <property type="match status" value="2"/>
</dbReference>
<dbReference type="HAMAP" id="MF_00484">
    <property type="entry name" value="Glycogen_synth"/>
    <property type="match status" value="1"/>
</dbReference>
<dbReference type="InterPro" id="IPR001296">
    <property type="entry name" value="Glyco_trans_1"/>
</dbReference>
<dbReference type="InterPro" id="IPR011835">
    <property type="entry name" value="GS/SS"/>
</dbReference>
<dbReference type="InterPro" id="IPR013534">
    <property type="entry name" value="Starch_synth_cat_dom"/>
</dbReference>
<dbReference type="NCBIfam" id="TIGR02095">
    <property type="entry name" value="glgA"/>
    <property type="match status" value="1"/>
</dbReference>
<dbReference type="NCBIfam" id="NF001899">
    <property type="entry name" value="PRK00654.1-2"/>
    <property type="match status" value="1"/>
</dbReference>
<dbReference type="PANTHER" id="PTHR45825:SF11">
    <property type="entry name" value="ALPHA AMYLASE DOMAIN-CONTAINING PROTEIN"/>
    <property type="match status" value="1"/>
</dbReference>
<dbReference type="PANTHER" id="PTHR45825">
    <property type="entry name" value="GRANULE-BOUND STARCH SYNTHASE 1, CHLOROPLASTIC/AMYLOPLASTIC"/>
    <property type="match status" value="1"/>
</dbReference>
<dbReference type="Pfam" id="PF08323">
    <property type="entry name" value="Glyco_transf_5"/>
    <property type="match status" value="1"/>
</dbReference>
<dbReference type="Pfam" id="PF00534">
    <property type="entry name" value="Glycos_transf_1"/>
    <property type="match status" value="1"/>
</dbReference>
<dbReference type="SUPFAM" id="SSF53756">
    <property type="entry name" value="UDP-Glycosyltransferase/glycogen phosphorylase"/>
    <property type="match status" value="1"/>
</dbReference>
<name>GLGA_SALDC</name>
<gene>
    <name evidence="1" type="primary">glgA</name>
    <name type="ordered locus">SeD_A3905</name>
</gene>
<reference key="1">
    <citation type="journal article" date="2011" name="J. Bacteriol.">
        <title>Comparative genomics of 28 Salmonella enterica isolates: evidence for CRISPR-mediated adaptive sublineage evolution.</title>
        <authorList>
            <person name="Fricke W.F."/>
            <person name="Mammel M.K."/>
            <person name="McDermott P.F."/>
            <person name="Tartera C."/>
            <person name="White D.G."/>
            <person name="Leclerc J.E."/>
            <person name="Ravel J."/>
            <person name="Cebula T.A."/>
        </authorList>
    </citation>
    <scope>NUCLEOTIDE SEQUENCE [LARGE SCALE GENOMIC DNA]</scope>
    <source>
        <strain>CT_02021853</strain>
    </source>
</reference>
<keyword id="KW-0320">Glycogen biosynthesis</keyword>
<keyword id="KW-0328">Glycosyltransferase</keyword>
<keyword id="KW-0808">Transferase</keyword>
<organism>
    <name type="scientific">Salmonella dublin (strain CT_02021853)</name>
    <dbReference type="NCBI Taxonomy" id="439851"/>
    <lineage>
        <taxon>Bacteria</taxon>
        <taxon>Pseudomonadati</taxon>
        <taxon>Pseudomonadota</taxon>
        <taxon>Gammaproteobacteria</taxon>
        <taxon>Enterobacterales</taxon>
        <taxon>Enterobacteriaceae</taxon>
        <taxon>Salmonella</taxon>
    </lineage>
</organism>
<feature type="chain" id="PRO_1000126097" description="Glycogen synthase">
    <location>
        <begin position="1"/>
        <end position="477"/>
    </location>
</feature>
<feature type="binding site" evidence="1">
    <location>
        <position position="15"/>
    </location>
    <ligand>
        <name>ADP-alpha-D-glucose</name>
        <dbReference type="ChEBI" id="CHEBI:57498"/>
    </ligand>
</feature>
<protein>
    <recommendedName>
        <fullName evidence="1">Glycogen synthase</fullName>
        <ecNumber evidence="1">2.4.1.21</ecNumber>
    </recommendedName>
    <alternativeName>
        <fullName evidence="1">Starch [bacterial glycogen] synthase</fullName>
    </alternativeName>
</protein>
<sequence length="477" mass="52946">MQVLHVCSEMFPLLKTGGLADVIGALPAAQIADGVDVRVLLPGFPDIRRGIPDAHVVSRRDTFAGKISLLFGHYNGVGIYLIDAPHLYERPGSPYHDTNLYAYTDNVLRFALLGWVGCEMACGLDPFWRPDVVHAHDWHAGLAPAYLAARGRPAKSVFTVHNLAYQGMFYAKHMDDIELPWSFFNMHGLEFNGQLSFLKAGLYYADHITAVSPTYAREITEPQFAYGMEGLLRQRHLEGRLSGILNGVDEKIWNPESDLLLASRYTRDTLEEKAENKRQLQIAMGLKVNDKVPLFAVVSRLTNQKGLDLVLEALPGLLEQGGQLALLGAGDPVLQEGFLAAAAEHPGQVGVQIGYHEAFSHRIMGGADVILVPSRFEPCGLTQLYGLKYGTLPLVRRTGGLADTVSDSSLENLADGIASGFVFEDSNAWSLLRAIRRAFVLWSRPSLWRFVQRQAMAMDFSWQVAAKSYRELYYRLK</sequence>
<evidence type="ECO:0000255" key="1">
    <source>
        <dbReference type="HAMAP-Rule" id="MF_00484"/>
    </source>
</evidence>
<proteinExistence type="inferred from homology"/>
<comment type="function">
    <text evidence="1">Synthesizes alpha-1,4-glucan chains using ADP-glucose.</text>
</comment>
<comment type="catalytic activity">
    <reaction evidence="1">
        <text>[(1-&gt;4)-alpha-D-glucosyl](n) + ADP-alpha-D-glucose = [(1-&gt;4)-alpha-D-glucosyl](n+1) + ADP + H(+)</text>
        <dbReference type="Rhea" id="RHEA:18189"/>
        <dbReference type="Rhea" id="RHEA-COMP:9584"/>
        <dbReference type="Rhea" id="RHEA-COMP:9587"/>
        <dbReference type="ChEBI" id="CHEBI:15378"/>
        <dbReference type="ChEBI" id="CHEBI:15444"/>
        <dbReference type="ChEBI" id="CHEBI:57498"/>
        <dbReference type="ChEBI" id="CHEBI:456216"/>
        <dbReference type="EC" id="2.4.1.21"/>
    </reaction>
</comment>
<comment type="pathway">
    <text evidence="1">Glycan biosynthesis; glycogen biosynthesis.</text>
</comment>
<comment type="similarity">
    <text evidence="1">Belongs to the glycosyltransferase 1 family. Bacterial/plant glycogen synthase subfamily.</text>
</comment>
<accession>B5FKF4</accession>